<comment type="function">
    <text evidence="1">Catalyzes the conversion of uracil and 5-phospho-alpha-D-ribose 1-diphosphate (PRPP) to UMP and diphosphate.</text>
</comment>
<comment type="catalytic activity">
    <reaction evidence="1">
        <text>UMP + diphosphate = 5-phospho-alpha-D-ribose 1-diphosphate + uracil</text>
        <dbReference type="Rhea" id="RHEA:13017"/>
        <dbReference type="ChEBI" id="CHEBI:17568"/>
        <dbReference type="ChEBI" id="CHEBI:33019"/>
        <dbReference type="ChEBI" id="CHEBI:57865"/>
        <dbReference type="ChEBI" id="CHEBI:58017"/>
        <dbReference type="EC" id="2.4.2.9"/>
    </reaction>
</comment>
<comment type="cofactor">
    <cofactor evidence="1">
        <name>Mg(2+)</name>
        <dbReference type="ChEBI" id="CHEBI:18420"/>
    </cofactor>
    <text evidence="1">Binds 1 Mg(2+) ion per subunit. The magnesium is bound as Mg-PRPP.</text>
</comment>
<comment type="activity regulation">
    <text evidence="1">Allosterically activated by GTP.</text>
</comment>
<comment type="pathway">
    <text evidence="1">Pyrimidine metabolism; UMP biosynthesis via salvage pathway; UMP from uracil: step 1/1.</text>
</comment>
<comment type="similarity">
    <text evidence="1">Belongs to the UPRTase family.</text>
</comment>
<proteinExistence type="inferred from homology"/>
<protein>
    <recommendedName>
        <fullName evidence="1">Uracil phosphoribosyltransferase</fullName>
        <ecNumber evidence="1">2.4.2.9</ecNumber>
    </recommendedName>
    <alternativeName>
        <fullName evidence="1">UMP pyrophosphorylase</fullName>
    </alternativeName>
    <alternativeName>
        <fullName evidence="1">UPRTase</fullName>
    </alternativeName>
</protein>
<accession>A8H5Q9</accession>
<keyword id="KW-0021">Allosteric enzyme</keyword>
<keyword id="KW-0328">Glycosyltransferase</keyword>
<keyword id="KW-0342">GTP-binding</keyword>
<keyword id="KW-0460">Magnesium</keyword>
<keyword id="KW-0547">Nucleotide-binding</keyword>
<keyword id="KW-1185">Reference proteome</keyword>
<keyword id="KW-0808">Transferase</keyword>
<organism>
    <name type="scientific">Shewanella pealeana (strain ATCC 700345 / ANG-SQ1)</name>
    <dbReference type="NCBI Taxonomy" id="398579"/>
    <lineage>
        <taxon>Bacteria</taxon>
        <taxon>Pseudomonadati</taxon>
        <taxon>Pseudomonadota</taxon>
        <taxon>Gammaproteobacteria</taxon>
        <taxon>Alteromonadales</taxon>
        <taxon>Shewanellaceae</taxon>
        <taxon>Shewanella</taxon>
    </lineage>
</organism>
<name>UPP_SHEPA</name>
<evidence type="ECO:0000255" key="1">
    <source>
        <dbReference type="HAMAP-Rule" id="MF_01218"/>
    </source>
</evidence>
<feature type="chain" id="PRO_1000085640" description="Uracil phosphoribosyltransferase">
    <location>
        <begin position="1"/>
        <end position="208"/>
    </location>
</feature>
<feature type="binding site" evidence="1">
    <location>
        <position position="78"/>
    </location>
    <ligand>
        <name>5-phospho-alpha-D-ribose 1-diphosphate</name>
        <dbReference type="ChEBI" id="CHEBI:58017"/>
    </ligand>
</feature>
<feature type="binding site" evidence="1">
    <location>
        <position position="103"/>
    </location>
    <ligand>
        <name>5-phospho-alpha-D-ribose 1-diphosphate</name>
        <dbReference type="ChEBI" id="CHEBI:58017"/>
    </ligand>
</feature>
<feature type="binding site" evidence="1">
    <location>
        <begin position="130"/>
        <end position="138"/>
    </location>
    <ligand>
        <name>5-phospho-alpha-D-ribose 1-diphosphate</name>
        <dbReference type="ChEBI" id="CHEBI:58017"/>
    </ligand>
</feature>
<feature type="binding site" evidence="1">
    <location>
        <position position="193"/>
    </location>
    <ligand>
        <name>uracil</name>
        <dbReference type="ChEBI" id="CHEBI:17568"/>
    </ligand>
</feature>
<feature type="binding site" evidence="1">
    <location>
        <begin position="198"/>
        <end position="200"/>
    </location>
    <ligand>
        <name>uracil</name>
        <dbReference type="ChEBI" id="CHEBI:17568"/>
    </ligand>
</feature>
<feature type="binding site" evidence="1">
    <location>
        <position position="199"/>
    </location>
    <ligand>
        <name>5-phospho-alpha-D-ribose 1-diphosphate</name>
        <dbReference type="ChEBI" id="CHEBI:58017"/>
    </ligand>
</feature>
<dbReference type="EC" id="2.4.2.9" evidence="1"/>
<dbReference type="EMBL" id="CP000851">
    <property type="protein sequence ID" value="ABV87896.1"/>
    <property type="molecule type" value="Genomic_DNA"/>
</dbReference>
<dbReference type="RefSeq" id="WP_012155802.1">
    <property type="nucleotide sequence ID" value="NC_009901.1"/>
</dbReference>
<dbReference type="SMR" id="A8H5Q9"/>
<dbReference type="STRING" id="398579.Spea_2576"/>
<dbReference type="KEGG" id="spl:Spea_2576"/>
<dbReference type="eggNOG" id="COG0035">
    <property type="taxonomic scope" value="Bacteria"/>
</dbReference>
<dbReference type="HOGENOM" id="CLU_067096_2_2_6"/>
<dbReference type="OrthoDB" id="9781675at2"/>
<dbReference type="UniPathway" id="UPA00574">
    <property type="reaction ID" value="UER00636"/>
</dbReference>
<dbReference type="Proteomes" id="UP000002608">
    <property type="component" value="Chromosome"/>
</dbReference>
<dbReference type="GO" id="GO:0005525">
    <property type="term" value="F:GTP binding"/>
    <property type="evidence" value="ECO:0007669"/>
    <property type="project" value="UniProtKB-KW"/>
</dbReference>
<dbReference type="GO" id="GO:0000287">
    <property type="term" value="F:magnesium ion binding"/>
    <property type="evidence" value="ECO:0007669"/>
    <property type="project" value="UniProtKB-UniRule"/>
</dbReference>
<dbReference type="GO" id="GO:0004845">
    <property type="term" value="F:uracil phosphoribosyltransferase activity"/>
    <property type="evidence" value="ECO:0007669"/>
    <property type="project" value="UniProtKB-UniRule"/>
</dbReference>
<dbReference type="GO" id="GO:0044206">
    <property type="term" value="P:UMP salvage"/>
    <property type="evidence" value="ECO:0007669"/>
    <property type="project" value="UniProtKB-UniRule"/>
</dbReference>
<dbReference type="GO" id="GO:0006223">
    <property type="term" value="P:uracil salvage"/>
    <property type="evidence" value="ECO:0007669"/>
    <property type="project" value="InterPro"/>
</dbReference>
<dbReference type="CDD" id="cd06223">
    <property type="entry name" value="PRTases_typeI"/>
    <property type="match status" value="1"/>
</dbReference>
<dbReference type="FunFam" id="3.40.50.2020:FF:000003">
    <property type="entry name" value="Uracil phosphoribosyltransferase"/>
    <property type="match status" value="1"/>
</dbReference>
<dbReference type="Gene3D" id="3.40.50.2020">
    <property type="match status" value="1"/>
</dbReference>
<dbReference type="HAMAP" id="MF_01218_B">
    <property type="entry name" value="Upp_B"/>
    <property type="match status" value="1"/>
</dbReference>
<dbReference type="InterPro" id="IPR000836">
    <property type="entry name" value="PRibTrfase_dom"/>
</dbReference>
<dbReference type="InterPro" id="IPR029057">
    <property type="entry name" value="PRTase-like"/>
</dbReference>
<dbReference type="InterPro" id="IPR034332">
    <property type="entry name" value="Upp_B"/>
</dbReference>
<dbReference type="InterPro" id="IPR050054">
    <property type="entry name" value="UPRTase/APRTase"/>
</dbReference>
<dbReference type="InterPro" id="IPR005765">
    <property type="entry name" value="Ura_phspho_trans"/>
</dbReference>
<dbReference type="NCBIfam" id="NF001097">
    <property type="entry name" value="PRK00129.1"/>
    <property type="match status" value="1"/>
</dbReference>
<dbReference type="NCBIfam" id="TIGR01091">
    <property type="entry name" value="upp"/>
    <property type="match status" value="1"/>
</dbReference>
<dbReference type="PANTHER" id="PTHR32315">
    <property type="entry name" value="ADENINE PHOSPHORIBOSYLTRANSFERASE"/>
    <property type="match status" value="1"/>
</dbReference>
<dbReference type="PANTHER" id="PTHR32315:SF4">
    <property type="entry name" value="URACIL PHOSPHORIBOSYLTRANSFERASE, CHLOROPLASTIC"/>
    <property type="match status" value="1"/>
</dbReference>
<dbReference type="Pfam" id="PF14681">
    <property type="entry name" value="UPRTase"/>
    <property type="match status" value="1"/>
</dbReference>
<dbReference type="SUPFAM" id="SSF53271">
    <property type="entry name" value="PRTase-like"/>
    <property type="match status" value="1"/>
</dbReference>
<gene>
    <name evidence="1" type="primary">upp</name>
    <name type="ordered locus">Spea_2576</name>
</gene>
<reference key="1">
    <citation type="submission" date="2007-10" db="EMBL/GenBank/DDBJ databases">
        <title>Complete sequence of Shewanella pealeana ATCC 700345.</title>
        <authorList>
            <consortium name="US DOE Joint Genome Institute"/>
            <person name="Copeland A."/>
            <person name="Lucas S."/>
            <person name="Lapidus A."/>
            <person name="Barry K."/>
            <person name="Glavina del Rio T."/>
            <person name="Dalin E."/>
            <person name="Tice H."/>
            <person name="Pitluck S."/>
            <person name="Chertkov O."/>
            <person name="Brettin T."/>
            <person name="Bruce D."/>
            <person name="Detter J.C."/>
            <person name="Han C."/>
            <person name="Schmutz J."/>
            <person name="Larimer F."/>
            <person name="Land M."/>
            <person name="Hauser L."/>
            <person name="Kyrpides N."/>
            <person name="Kim E."/>
            <person name="Zhao J.-S.Z."/>
            <person name="Manno D."/>
            <person name="Hawari J."/>
            <person name="Richardson P."/>
        </authorList>
    </citation>
    <scope>NUCLEOTIDE SEQUENCE [LARGE SCALE GENOMIC DNA]</scope>
    <source>
        <strain>ATCC 700345 / ANG-SQ1</strain>
    </source>
</reference>
<sequence>MKVVEVKHPLVRHKIGLMREGNISTKRFRELAAEVGSLLTYEATADFETEKVTIDGWNGPVEIEQIKGKKVTVVPILRAGLGMMDGVLEHVPSARISVVGIYRDEETLEPVPYFEKLASDMPSRIALVVDPMLATGGSMISTIDLLKERGCTAIKALVLVAAPEGVAALEKAHPDIELYTASIDDCLNEQGYILPGLGDAGDKIFGTK</sequence>